<organism>
    <name type="scientific">Bacillus cereus (strain ZK / E33L)</name>
    <dbReference type="NCBI Taxonomy" id="288681"/>
    <lineage>
        <taxon>Bacteria</taxon>
        <taxon>Bacillati</taxon>
        <taxon>Bacillota</taxon>
        <taxon>Bacilli</taxon>
        <taxon>Bacillales</taxon>
        <taxon>Bacillaceae</taxon>
        <taxon>Bacillus</taxon>
        <taxon>Bacillus cereus group</taxon>
    </lineage>
</organism>
<sequence>MIYYVIALFVIAIDQISKWLIVKNMELGTSIPIIDNVLYITSHRNRGAAWGILENKMWFFYIITVVFVVFIVFYMKKYAKTDKLLGISLGLILGGAIGNFIDRVFRQEVVDFIHVYIFSYNYPVFNIADSALCIGVVLIIIQTLLEGKKTKE</sequence>
<name>LSPA_BACCZ</name>
<reference key="1">
    <citation type="journal article" date="2006" name="J. Bacteriol.">
        <title>Pathogenomic sequence analysis of Bacillus cereus and Bacillus thuringiensis isolates closely related to Bacillus anthracis.</title>
        <authorList>
            <person name="Han C.S."/>
            <person name="Xie G."/>
            <person name="Challacombe J.F."/>
            <person name="Altherr M.R."/>
            <person name="Bhotika S.S."/>
            <person name="Bruce D."/>
            <person name="Campbell C.S."/>
            <person name="Campbell M.L."/>
            <person name="Chen J."/>
            <person name="Chertkov O."/>
            <person name="Cleland C."/>
            <person name="Dimitrijevic M."/>
            <person name="Doggett N.A."/>
            <person name="Fawcett J.J."/>
            <person name="Glavina T."/>
            <person name="Goodwin L.A."/>
            <person name="Hill K.K."/>
            <person name="Hitchcock P."/>
            <person name="Jackson P.J."/>
            <person name="Keim P."/>
            <person name="Kewalramani A.R."/>
            <person name="Longmire J."/>
            <person name="Lucas S."/>
            <person name="Malfatti S."/>
            <person name="McMurry K."/>
            <person name="Meincke L.J."/>
            <person name="Misra M."/>
            <person name="Moseman B.L."/>
            <person name="Mundt M."/>
            <person name="Munk A.C."/>
            <person name="Okinaka R.T."/>
            <person name="Parson-Quintana B."/>
            <person name="Reilly L.P."/>
            <person name="Richardson P."/>
            <person name="Robinson D.L."/>
            <person name="Rubin E."/>
            <person name="Saunders E."/>
            <person name="Tapia R."/>
            <person name="Tesmer J.G."/>
            <person name="Thayer N."/>
            <person name="Thompson L.S."/>
            <person name="Tice H."/>
            <person name="Ticknor L.O."/>
            <person name="Wills P.L."/>
            <person name="Brettin T.S."/>
            <person name="Gilna P."/>
        </authorList>
    </citation>
    <scope>NUCLEOTIDE SEQUENCE [LARGE SCALE GENOMIC DNA]</scope>
    <source>
        <strain>ZK / E33L</strain>
    </source>
</reference>
<keyword id="KW-0064">Aspartyl protease</keyword>
<keyword id="KW-1003">Cell membrane</keyword>
<keyword id="KW-0378">Hydrolase</keyword>
<keyword id="KW-0472">Membrane</keyword>
<keyword id="KW-0645">Protease</keyword>
<keyword id="KW-0812">Transmembrane</keyword>
<keyword id="KW-1133">Transmembrane helix</keyword>
<feature type="chain" id="PRO_0000289351" description="Lipoprotein signal peptidase">
    <location>
        <begin position="1"/>
        <end position="152"/>
    </location>
</feature>
<feature type="transmembrane region" description="Helical" evidence="1">
    <location>
        <begin position="55"/>
        <end position="75"/>
    </location>
</feature>
<feature type="transmembrane region" description="Helical" evidence="1">
    <location>
        <begin position="85"/>
        <end position="105"/>
    </location>
</feature>
<feature type="transmembrane region" description="Helical" evidence="1">
    <location>
        <begin position="124"/>
        <end position="144"/>
    </location>
</feature>
<feature type="active site" evidence="1">
    <location>
        <position position="111"/>
    </location>
</feature>
<feature type="active site" evidence="1">
    <location>
        <position position="129"/>
    </location>
</feature>
<gene>
    <name evidence="1" type="primary">lspA</name>
    <name type="ordered locus">BCE33L3652</name>
</gene>
<comment type="function">
    <text evidence="1">This protein specifically catalyzes the removal of signal peptides from prolipoproteins.</text>
</comment>
<comment type="catalytic activity">
    <reaction evidence="1">
        <text>Release of signal peptides from bacterial membrane prolipoproteins. Hydrolyzes -Xaa-Yaa-Zaa-|-(S,diacylglyceryl)Cys-, in which Xaa is hydrophobic (preferably Leu), and Yaa (Ala or Ser) and Zaa (Gly or Ala) have small, neutral side chains.</text>
        <dbReference type="EC" id="3.4.23.36"/>
    </reaction>
</comment>
<comment type="pathway">
    <text evidence="1">Protein modification; lipoprotein biosynthesis (signal peptide cleavage).</text>
</comment>
<comment type="subcellular location">
    <subcellularLocation>
        <location evidence="1">Cell membrane</location>
        <topology evidence="1">Multi-pass membrane protein</topology>
    </subcellularLocation>
</comment>
<comment type="similarity">
    <text evidence="1">Belongs to the peptidase A8 family.</text>
</comment>
<accession>Q636D3</accession>
<dbReference type="EC" id="3.4.23.36" evidence="1"/>
<dbReference type="EMBL" id="CP000001">
    <property type="protein sequence ID" value="AAU16614.1"/>
    <property type="molecule type" value="Genomic_DNA"/>
</dbReference>
<dbReference type="RefSeq" id="WP_000642181.1">
    <property type="nucleotide sequence ID" value="NZ_CP009968.1"/>
</dbReference>
<dbReference type="SMR" id="Q636D3"/>
<dbReference type="GeneID" id="45023722"/>
<dbReference type="KEGG" id="bcz:BCE33L3652"/>
<dbReference type="PATRIC" id="fig|288681.22.peg.1759"/>
<dbReference type="UniPathway" id="UPA00665"/>
<dbReference type="Proteomes" id="UP000002612">
    <property type="component" value="Chromosome"/>
</dbReference>
<dbReference type="GO" id="GO:0005886">
    <property type="term" value="C:plasma membrane"/>
    <property type="evidence" value="ECO:0007669"/>
    <property type="project" value="UniProtKB-SubCell"/>
</dbReference>
<dbReference type="GO" id="GO:0004190">
    <property type="term" value="F:aspartic-type endopeptidase activity"/>
    <property type="evidence" value="ECO:0007669"/>
    <property type="project" value="UniProtKB-UniRule"/>
</dbReference>
<dbReference type="GO" id="GO:0006508">
    <property type="term" value="P:proteolysis"/>
    <property type="evidence" value="ECO:0007669"/>
    <property type="project" value="UniProtKB-KW"/>
</dbReference>
<dbReference type="HAMAP" id="MF_00161">
    <property type="entry name" value="LspA"/>
    <property type="match status" value="1"/>
</dbReference>
<dbReference type="InterPro" id="IPR001872">
    <property type="entry name" value="Peptidase_A8"/>
</dbReference>
<dbReference type="NCBIfam" id="TIGR00077">
    <property type="entry name" value="lspA"/>
    <property type="match status" value="1"/>
</dbReference>
<dbReference type="PANTHER" id="PTHR33695">
    <property type="entry name" value="LIPOPROTEIN SIGNAL PEPTIDASE"/>
    <property type="match status" value="1"/>
</dbReference>
<dbReference type="PANTHER" id="PTHR33695:SF1">
    <property type="entry name" value="LIPOPROTEIN SIGNAL PEPTIDASE"/>
    <property type="match status" value="1"/>
</dbReference>
<dbReference type="Pfam" id="PF01252">
    <property type="entry name" value="Peptidase_A8"/>
    <property type="match status" value="1"/>
</dbReference>
<dbReference type="PRINTS" id="PR00781">
    <property type="entry name" value="LIPOSIGPTASE"/>
</dbReference>
<dbReference type="PROSITE" id="PS00855">
    <property type="entry name" value="SPASE_II"/>
    <property type="match status" value="1"/>
</dbReference>
<protein>
    <recommendedName>
        <fullName evidence="1">Lipoprotein signal peptidase</fullName>
        <ecNumber evidence="1">3.4.23.36</ecNumber>
    </recommendedName>
    <alternativeName>
        <fullName evidence="1">Prolipoprotein signal peptidase</fullName>
    </alternativeName>
    <alternativeName>
        <fullName evidence="1">Signal peptidase II</fullName>
        <shortName evidence="1">SPase II</shortName>
    </alternativeName>
</protein>
<proteinExistence type="inferred from homology"/>
<evidence type="ECO:0000255" key="1">
    <source>
        <dbReference type="HAMAP-Rule" id="MF_00161"/>
    </source>
</evidence>